<proteinExistence type="evidence at protein level"/>
<keyword id="KW-0025">Alternative splicing</keyword>
<keyword id="KW-1048">Host nucleus</keyword>
<keyword id="KW-0945">Host-virus interaction</keyword>
<keyword id="KW-0813">Transport</keyword>
<keyword id="KW-0946">Virion</keyword>
<dbReference type="EMBL" id="M16634">
    <property type="protein sequence ID" value="AAA43751.1"/>
    <property type="molecule type" value="Genomic_RNA"/>
</dbReference>
<dbReference type="EMBL" id="M16633">
    <property type="protein sequence ID" value="AAA43760.1"/>
    <property type="molecule type" value="Genomic_RNA"/>
</dbReference>
<dbReference type="PIR" id="E27529">
    <property type="entry name" value="MNIV23"/>
</dbReference>
<dbReference type="SMR" id="P08014"/>
<dbReference type="GO" id="GO:0042025">
    <property type="term" value="C:host cell nucleus"/>
    <property type="evidence" value="ECO:0007669"/>
    <property type="project" value="UniProtKB-SubCell"/>
</dbReference>
<dbReference type="GO" id="GO:0044423">
    <property type="term" value="C:virion component"/>
    <property type="evidence" value="ECO:0007669"/>
    <property type="project" value="UniProtKB-UniRule"/>
</dbReference>
<dbReference type="GO" id="GO:0039675">
    <property type="term" value="P:exit of virus from host cell nucleus through nuclear pore"/>
    <property type="evidence" value="ECO:0007669"/>
    <property type="project" value="UniProtKB-UniRule"/>
</dbReference>
<dbReference type="HAMAP" id="MF_04067">
    <property type="entry name" value="INFV_NEP"/>
    <property type="match status" value="1"/>
</dbReference>
<dbReference type="InterPro" id="IPR000968">
    <property type="entry name" value="Flu_NS2"/>
</dbReference>
<dbReference type="Pfam" id="PF00601">
    <property type="entry name" value="Flu_NS2"/>
    <property type="match status" value="1"/>
</dbReference>
<accession>P08014</accession>
<protein>
    <recommendedName>
        <fullName evidence="1">Nuclear export protein</fullName>
        <shortName evidence="1">NEP</shortName>
    </recommendedName>
    <alternativeName>
        <fullName evidence="1">Non-structural protein 2</fullName>
        <shortName evidence="1">NS2</shortName>
    </alternativeName>
</protein>
<sequence>MADNMTTTQIEWRMKKMAIGSSTHSSSVLMKDIQSQFEQLKLRWESYPNLVKSTDYHQRRETIRLVTEELYLLSKRIDDNILFHKTVIANSSIIADMIVSLSLLETLYEMKDVVEVYSRQCL</sequence>
<comment type="function">
    <text evidence="1">Mediates the nuclear export of encapsidated genomic RNAs (ribonucleoproteins, RNPs). Acts as an adapter between viral RNPs complexes and the nuclear export machinery of the cell. Possesses no intrinsic RNA-binding activity, but includes a C-terminal M1-binding domain. This domain is believed to allow recognition of RNPs bound to the protein M1. Since protein M1 is not available in large quantities before late stages of infection, such an indirect recognition mechanism probably ensures that genomic RNPs are not exported from the host nucleus until sufficient quantities of viral mRNA and progeny genomic RNA have been synthesized. Furthermore, the RNPs enter the host cytoplasm only when associated with the M1 protein that is necessary to guide them to the plasma membrane. May down-regulate viral RNA synthesis when overproduced.</text>
</comment>
<comment type="subunit">
    <text evidence="1">Interacts with protein M1. May interact with host nucleoporin RAB/HRB and exportin XPO1/CRM1.</text>
</comment>
<comment type="subcellular location">
    <subcellularLocation>
        <location evidence="1">Virion</location>
    </subcellularLocation>
    <subcellularLocation>
        <location evidence="1">Host nucleus</location>
    </subcellularLocation>
</comment>
<comment type="alternative products">
    <event type="alternative splicing"/>
    <isoform>
        <id>P08014-1</id>
        <name>NEP</name>
        <name>NS2</name>
        <sequence type="displayed"/>
    </isoform>
    <isoform>
        <id>P08013-1</id>
        <name>NS1</name>
        <sequence type="external"/>
    </isoform>
</comment>
<comment type="similarity">
    <text evidence="1">Belongs to the influenza viruses NEP family.</text>
</comment>
<organism>
    <name type="scientific">Influenza B virus (strain B/Yamagata/1/1973)</name>
    <dbReference type="NCBI Taxonomy" id="11550"/>
    <lineage>
        <taxon>Viruses</taxon>
        <taxon>Riboviria</taxon>
        <taxon>Orthornavirae</taxon>
        <taxon>Negarnaviricota</taxon>
        <taxon>Polyploviricotina</taxon>
        <taxon>Insthoviricetes</taxon>
        <taxon>Articulavirales</taxon>
        <taxon>Orthomyxoviridae</taxon>
        <taxon>Betainfluenzavirus</taxon>
        <taxon>Betainfluenzavirus influenzae</taxon>
        <taxon>Influenza B virus</taxon>
    </lineage>
</organism>
<evidence type="ECO:0000255" key="1">
    <source>
        <dbReference type="HAMAP-Rule" id="MF_04067"/>
    </source>
</evidence>
<reference key="1">
    <citation type="journal article" date="1987" name="Virology">
        <title>Infectious influenza A and B virus variants with long carboxyl terminal deletions in the NS1 polypeptides.</title>
        <authorList>
            <person name="Norton G.P."/>
            <person name="Tanaka T."/>
            <person name="Tobita K."/>
            <person name="Nakada S."/>
            <person name="Buonagurio D.A."/>
            <person name="Greenspan D."/>
            <person name="Krystal M."/>
            <person name="Palese P."/>
        </authorList>
    </citation>
    <scope>NUCLEOTIDE SEQUENCE [GENOMIC RNA]</scope>
</reference>
<reference key="2">
    <citation type="journal article" date="2001" name="J. Virol.">
        <title>Influenza B and C virus NEP (NS2) proteins possess nuclear export activities.</title>
        <authorList>
            <person name="Paragas J."/>
            <person name="Talon J."/>
            <person name="O'Neill R.E."/>
            <person name="Anderson D.K."/>
            <person name="Garcia-Sastre A."/>
            <person name="Palese P."/>
        </authorList>
    </citation>
    <scope>INTERACTION WITH HUMAN XPO1</scope>
</reference>
<gene>
    <name evidence="1" type="primary">NS</name>
</gene>
<organismHost>
    <name type="scientific">Homo sapiens</name>
    <name type="common">Human</name>
    <dbReference type="NCBI Taxonomy" id="9606"/>
</organismHost>
<name>NEP_INBYA</name>
<feature type="chain" id="PRO_0000079016" description="Nuclear export protein">
    <location>
        <begin position="1"/>
        <end position="122"/>
    </location>
</feature>
<feature type="short sequence motif" description="Nuclear export signal" evidence="1">
    <location>
        <begin position="10"/>
        <end position="19"/>
    </location>
</feature>
<feature type="short sequence motif" description="Nuclear export signal" evidence="1">
    <location>
        <begin position="86"/>
        <end position="95"/>
    </location>
</feature>